<dbReference type="EMBL" id="AY848983">
    <property type="protein sequence ID" value="AAX50204.1"/>
    <property type="molecule type" value="mRNA"/>
</dbReference>
<dbReference type="SMR" id="Q58T77"/>
<dbReference type="GO" id="GO:0005576">
    <property type="term" value="C:extracellular region"/>
    <property type="evidence" value="ECO:0007669"/>
    <property type="project" value="UniProtKB-SubCell"/>
</dbReference>
<dbReference type="GO" id="GO:0042742">
    <property type="term" value="P:defense response to bacterium"/>
    <property type="evidence" value="ECO:0007669"/>
    <property type="project" value="UniProtKB-KW"/>
</dbReference>
<dbReference type="GO" id="GO:0050832">
    <property type="term" value="P:defense response to fungus"/>
    <property type="evidence" value="ECO:0007669"/>
    <property type="project" value="UniProtKB-KW"/>
</dbReference>
<dbReference type="GO" id="GO:0031640">
    <property type="term" value="P:killing of cells of another organism"/>
    <property type="evidence" value="ECO:0007669"/>
    <property type="project" value="UniProtKB-KW"/>
</dbReference>
<dbReference type="InterPro" id="IPR007962">
    <property type="entry name" value="Bombinin"/>
</dbReference>
<dbReference type="Pfam" id="PF05298">
    <property type="entry name" value="Bombinin"/>
    <property type="match status" value="1"/>
</dbReference>
<organism>
    <name type="scientific">Bombina maxima</name>
    <name type="common">Giant fire-bellied toad</name>
    <name type="synonym">Chinese red belly toad</name>
    <dbReference type="NCBI Taxonomy" id="161274"/>
    <lineage>
        <taxon>Eukaryota</taxon>
        <taxon>Metazoa</taxon>
        <taxon>Chordata</taxon>
        <taxon>Craniata</taxon>
        <taxon>Vertebrata</taxon>
        <taxon>Euteleostomi</taxon>
        <taxon>Amphibia</taxon>
        <taxon>Batrachia</taxon>
        <taxon>Anura</taxon>
        <taxon>Bombinatoridae</taxon>
        <taxon>Bombina</taxon>
    </lineage>
</organism>
<feature type="signal peptide" evidence="1">
    <location>
        <begin position="1"/>
        <end position="18"/>
    </location>
</feature>
<feature type="propeptide" id="PRO_0000003176">
    <location>
        <begin position="19"/>
        <end position="43"/>
    </location>
</feature>
<feature type="peptide" id="PRO_0000003177" description="Maximin-4">
    <location>
        <begin position="44"/>
        <end position="70"/>
    </location>
</feature>
<feature type="propeptide" id="PRO_0000003178" evidence="2">
    <location>
        <begin position="74"/>
        <end position="118"/>
    </location>
</feature>
<feature type="peptide" id="PRO_0000003179" description="Maximin-H3">
    <location>
        <begin position="119"/>
        <end position="138"/>
    </location>
</feature>
<feature type="modified residue" description="Asparagine amide" evidence="2 3">
    <location>
        <position position="70"/>
    </location>
</feature>
<feature type="modified residue" description="Isoleucine amide" evidence="2 3">
    <location>
        <position position="138"/>
    </location>
</feature>
<comment type="function">
    <text>Maximin-4 shows antibacterial activity against both Gram-positive and Gram-negative bacteria. It also shows antimicrobial activity against the fungus C.albicans, but not against A.flavus nor P.uticale. It has little hemolytic activity. It does not possess a significant cytotoxicity against tumor cell lines. It does not possess a significant anti-HIV activity.</text>
</comment>
<comment type="function">
    <text>Maximin-H3 shows antibacterial activity against both Gram-positive and Gram-negative bacteria. It also shows antimicrobial activity against the fungus C.albicans. Shows strong hemolytic activity.</text>
</comment>
<comment type="subcellular location">
    <subcellularLocation>
        <location evidence="4">Secreted</location>
    </subcellularLocation>
</comment>
<comment type="tissue specificity">
    <text evidence="4">Expressed by the skin glands.</text>
</comment>
<comment type="mass spectrometry">
    <molecule>Maximin-4</molecule>
</comment>
<comment type="mass spectrometry">
    <molecule>Maximin-H3</molecule>
</comment>
<comment type="similarity">
    <text evidence="5">Belongs to the bombinin family.</text>
</comment>
<evidence type="ECO:0000255" key="1"/>
<evidence type="ECO:0000269" key="2">
    <source>
    </source>
</evidence>
<evidence type="ECO:0000269" key="3">
    <source>
    </source>
</evidence>
<evidence type="ECO:0000269" key="4">
    <source ref="2"/>
</evidence>
<evidence type="ECO:0000305" key="5"/>
<reference key="1">
    <citation type="journal article" date="2005" name="Eur. J. Immunol.">
        <title>Variety of antimicrobial peptides in the Bombina maxima toad and evidence of their rapid diversification.</title>
        <authorList>
            <person name="Lee W.-H."/>
            <person name="Li Y."/>
            <person name="Lai R."/>
            <person name="Li S."/>
            <person name="Zhang Y."/>
            <person name="Wang W."/>
        </authorList>
    </citation>
    <scope>NUCLEOTIDE SEQUENCE [MRNA]</scope>
    <scope>AMIDATION AT ASN-70 AND ILE-138</scope>
    <source>
        <tissue>Skin</tissue>
    </source>
</reference>
<reference key="2">
    <citation type="submission" date="2001-07" db="UniProtKB">
        <title>Isolation and structural characterisation of antimicrobial peptides from the venom of the Chinese large-webbed bell toad (Bombina maxima).</title>
        <authorList>
            <person name="Chen T.B."/>
            <person name="McClean S."/>
            <person name="Orr D.F."/>
            <person name="Bjourson A.J."/>
            <person name="Rao P.F."/>
            <person name="Shaw C."/>
        </authorList>
    </citation>
    <scope>PROTEIN SEQUENCE OF 44-70</scope>
    <scope>FUNCTION OF MAXIMIN-4</scope>
    <scope>SUBCELLULAR LOCATION</scope>
    <scope>TISSUE SPECIFICITY</scope>
    <source>
        <tissue>Skin secretion</tissue>
    </source>
</reference>
<reference key="3">
    <citation type="journal article" date="2002" name="Peptides">
        <title>Antimicrobial peptides from skin secretions of Chinese red belly toad Bombina maxima.</title>
        <authorList>
            <person name="Lai R."/>
            <person name="Zheng Y.-T."/>
            <person name="Shen J.-H."/>
            <person name="Liu G.-J."/>
            <person name="Liu H."/>
            <person name="Lee W.-H."/>
            <person name="Tang S.-Z."/>
            <person name="Zhang Y."/>
        </authorList>
    </citation>
    <scope>PROTEIN SEQUENCE OF 44-70 AND 119-138</scope>
    <scope>AMIDATION AT ASN-70 AND ILE-138</scope>
    <scope>FUNCTION OF MAXIMIN-4 AND MAXIMIN-H3</scope>
    <scope>MASS SPECTROMETRY</scope>
    <source>
        <tissue>Skin</tissue>
        <tissue>Skin secretion</tissue>
    </source>
</reference>
<name>M4H37_BOMMX</name>
<accession>Q58T77</accession>
<protein>
    <recommendedName>
        <fullName>Maximins 4/H3 type 7</fullName>
    </recommendedName>
    <component>
        <recommendedName>
            <fullName>Maximin-4</fullName>
        </recommendedName>
    </component>
    <component>
        <recommendedName>
            <fullName>Maximin-H3</fullName>
        </recommendedName>
    </component>
</protein>
<sequence>MNFKYIVAVSFLIASAYARSVQNDEQSLSQRDVLEEESLREIRGIGGVLLSAGKAALKGLAKVLAEKYANGKRTAEDHEVMKRLEAIMRDLDSLDYPEEASERETRGFNQDEIAKEKRILGPVLGLVGNALGGLIKKIG</sequence>
<keyword id="KW-0027">Amidation</keyword>
<keyword id="KW-0878">Amphibian defense peptide</keyword>
<keyword id="KW-0044">Antibiotic</keyword>
<keyword id="KW-0929">Antimicrobial</keyword>
<keyword id="KW-0165">Cleavage on pair of basic residues</keyword>
<keyword id="KW-0204">Cytolysis</keyword>
<keyword id="KW-0903">Direct protein sequencing</keyword>
<keyword id="KW-0295">Fungicide</keyword>
<keyword id="KW-0354">Hemolysis</keyword>
<keyword id="KW-0964">Secreted</keyword>
<keyword id="KW-0732">Signal</keyword>
<proteinExistence type="evidence at protein level"/>